<name>MUTL_PSEAE</name>
<organism>
    <name type="scientific">Pseudomonas aeruginosa (strain ATCC 15692 / DSM 22644 / CIP 104116 / JCM 14847 / LMG 12228 / 1C / PRS 101 / PAO1)</name>
    <dbReference type="NCBI Taxonomy" id="208964"/>
    <lineage>
        <taxon>Bacteria</taxon>
        <taxon>Pseudomonadati</taxon>
        <taxon>Pseudomonadota</taxon>
        <taxon>Gammaproteobacteria</taxon>
        <taxon>Pseudomonadales</taxon>
        <taxon>Pseudomonadaceae</taxon>
        <taxon>Pseudomonas</taxon>
    </lineage>
</organism>
<keyword id="KW-0227">DNA damage</keyword>
<keyword id="KW-0234">DNA repair</keyword>
<keyword id="KW-1185">Reference proteome</keyword>
<reference key="1">
    <citation type="journal article" date="2000" name="Nature">
        <title>Complete genome sequence of Pseudomonas aeruginosa PAO1, an opportunistic pathogen.</title>
        <authorList>
            <person name="Stover C.K."/>
            <person name="Pham X.-Q.T."/>
            <person name="Erwin A.L."/>
            <person name="Mizoguchi S.D."/>
            <person name="Warrener P."/>
            <person name="Hickey M.J."/>
            <person name="Brinkman F.S.L."/>
            <person name="Hufnagle W.O."/>
            <person name="Kowalik D.J."/>
            <person name="Lagrou M."/>
            <person name="Garber R.L."/>
            <person name="Goltry L."/>
            <person name="Tolentino E."/>
            <person name="Westbrock-Wadman S."/>
            <person name="Yuan Y."/>
            <person name="Brody L.L."/>
            <person name="Coulter S.N."/>
            <person name="Folger K.R."/>
            <person name="Kas A."/>
            <person name="Larbig K."/>
            <person name="Lim R.M."/>
            <person name="Smith K.A."/>
            <person name="Spencer D.H."/>
            <person name="Wong G.K.-S."/>
            <person name="Wu Z."/>
            <person name="Paulsen I.T."/>
            <person name="Reizer J."/>
            <person name="Saier M.H. Jr."/>
            <person name="Hancock R.E.W."/>
            <person name="Lory S."/>
            <person name="Olson M.V."/>
        </authorList>
    </citation>
    <scope>NUCLEOTIDE SEQUENCE [LARGE SCALE GENOMIC DNA]</scope>
    <source>
        <strain>ATCC 15692 / DSM 22644 / CIP 104116 / JCM 14847 / LMG 12228 / 1C / PRS 101 / PAO1</strain>
    </source>
</reference>
<protein>
    <recommendedName>
        <fullName evidence="1">DNA mismatch repair protein MutL</fullName>
    </recommendedName>
</protein>
<dbReference type="EMBL" id="AE004091">
    <property type="protein sequence ID" value="AAG08331.1"/>
    <property type="molecule type" value="Genomic_DNA"/>
</dbReference>
<dbReference type="PIR" id="F83028">
    <property type="entry name" value="F83028"/>
</dbReference>
<dbReference type="RefSeq" id="NP_253633.1">
    <property type="nucleotide sequence ID" value="NC_002516.2"/>
</dbReference>
<dbReference type="RefSeq" id="WP_003106411.1">
    <property type="nucleotide sequence ID" value="NZ_QZGE01000002.1"/>
</dbReference>
<dbReference type="SMR" id="Q9HUL8"/>
<dbReference type="FunCoup" id="Q9HUL8">
    <property type="interactions" value="304"/>
</dbReference>
<dbReference type="STRING" id="208964.PA4946"/>
<dbReference type="PaxDb" id="208964-PA4946"/>
<dbReference type="GeneID" id="878468"/>
<dbReference type="KEGG" id="pae:PA4946"/>
<dbReference type="PATRIC" id="fig|208964.12.peg.5179"/>
<dbReference type="PseudoCAP" id="PA4946"/>
<dbReference type="HOGENOM" id="CLU_004131_4_2_6"/>
<dbReference type="InParanoid" id="Q9HUL8"/>
<dbReference type="OrthoDB" id="9763467at2"/>
<dbReference type="PhylomeDB" id="Q9HUL8"/>
<dbReference type="BioCyc" id="PAER208964:G1FZ6-5062-MONOMER"/>
<dbReference type="Proteomes" id="UP000002438">
    <property type="component" value="Chromosome"/>
</dbReference>
<dbReference type="GO" id="GO:0032300">
    <property type="term" value="C:mismatch repair complex"/>
    <property type="evidence" value="ECO:0000318"/>
    <property type="project" value="GO_Central"/>
</dbReference>
<dbReference type="GO" id="GO:0005524">
    <property type="term" value="F:ATP binding"/>
    <property type="evidence" value="ECO:0007669"/>
    <property type="project" value="InterPro"/>
</dbReference>
<dbReference type="GO" id="GO:0016887">
    <property type="term" value="F:ATP hydrolysis activity"/>
    <property type="evidence" value="ECO:0000318"/>
    <property type="project" value="GO_Central"/>
</dbReference>
<dbReference type="GO" id="GO:0140664">
    <property type="term" value="F:ATP-dependent DNA damage sensor activity"/>
    <property type="evidence" value="ECO:0007669"/>
    <property type="project" value="InterPro"/>
</dbReference>
<dbReference type="GO" id="GO:0030983">
    <property type="term" value="F:mismatched DNA binding"/>
    <property type="evidence" value="ECO:0007669"/>
    <property type="project" value="InterPro"/>
</dbReference>
<dbReference type="GO" id="GO:0006298">
    <property type="term" value="P:mismatch repair"/>
    <property type="evidence" value="ECO:0000318"/>
    <property type="project" value="GO_Central"/>
</dbReference>
<dbReference type="CDD" id="cd16926">
    <property type="entry name" value="HATPase_MutL-MLH-PMS-like"/>
    <property type="match status" value="1"/>
</dbReference>
<dbReference type="CDD" id="cd03482">
    <property type="entry name" value="MutL_Trans_MutL"/>
    <property type="match status" value="1"/>
</dbReference>
<dbReference type="FunFam" id="3.30.230.10:FF:000013">
    <property type="entry name" value="DNA mismatch repair endonuclease MutL"/>
    <property type="match status" value="1"/>
</dbReference>
<dbReference type="FunFam" id="3.30.565.10:FF:000003">
    <property type="entry name" value="DNA mismatch repair endonuclease MutL"/>
    <property type="match status" value="1"/>
</dbReference>
<dbReference type="FunFam" id="3.30.1370.100:FF:000005">
    <property type="entry name" value="DNA mismatch repair protein MutL"/>
    <property type="match status" value="1"/>
</dbReference>
<dbReference type="Gene3D" id="3.30.230.10">
    <property type="match status" value="1"/>
</dbReference>
<dbReference type="Gene3D" id="3.30.565.10">
    <property type="entry name" value="Histidine kinase-like ATPase, C-terminal domain"/>
    <property type="match status" value="1"/>
</dbReference>
<dbReference type="Gene3D" id="3.30.1540.20">
    <property type="entry name" value="MutL, C-terminal domain, dimerisation subdomain"/>
    <property type="match status" value="1"/>
</dbReference>
<dbReference type="Gene3D" id="3.30.1370.100">
    <property type="entry name" value="MutL, C-terminal domain, regulatory subdomain"/>
    <property type="match status" value="1"/>
</dbReference>
<dbReference type="HAMAP" id="MF_00149">
    <property type="entry name" value="DNA_mis_repair"/>
    <property type="match status" value="1"/>
</dbReference>
<dbReference type="InterPro" id="IPR014762">
    <property type="entry name" value="DNA_mismatch_repair_CS"/>
</dbReference>
<dbReference type="InterPro" id="IPR020667">
    <property type="entry name" value="DNA_mismatch_repair_MutL"/>
</dbReference>
<dbReference type="InterPro" id="IPR013507">
    <property type="entry name" value="DNA_mismatch_S5_2-like"/>
</dbReference>
<dbReference type="InterPro" id="IPR036890">
    <property type="entry name" value="HATPase_C_sf"/>
</dbReference>
<dbReference type="InterPro" id="IPR002099">
    <property type="entry name" value="MutL/Mlh/PMS"/>
</dbReference>
<dbReference type="InterPro" id="IPR038973">
    <property type="entry name" value="MutL/Mlh/Pms-like"/>
</dbReference>
<dbReference type="InterPro" id="IPR014790">
    <property type="entry name" value="MutL_C"/>
</dbReference>
<dbReference type="InterPro" id="IPR042120">
    <property type="entry name" value="MutL_C_dimsub"/>
</dbReference>
<dbReference type="InterPro" id="IPR042121">
    <property type="entry name" value="MutL_C_regsub"/>
</dbReference>
<dbReference type="InterPro" id="IPR037198">
    <property type="entry name" value="MutL_C_sf"/>
</dbReference>
<dbReference type="InterPro" id="IPR020568">
    <property type="entry name" value="Ribosomal_Su5_D2-typ_SF"/>
</dbReference>
<dbReference type="InterPro" id="IPR014721">
    <property type="entry name" value="Ribsml_uS5_D2-typ_fold_subgr"/>
</dbReference>
<dbReference type="NCBIfam" id="TIGR00585">
    <property type="entry name" value="mutl"/>
    <property type="match status" value="1"/>
</dbReference>
<dbReference type="NCBIfam" id="NF000949">
    <property type="entry name" value="PRK00095.1-2"/>
    <property type="match status" value="1"/>
</dbReference>
<dbReference type="PANTHER" id="PTHR10073">
    <property type="entry name" value="DNA MISMATCH REPAIR PROTEIN MLH, PMS, MUTL"/>
    <property type="match status" value="1"/>
</dbReference>
<dbReference type="PANTHER" id="PTHR10073:SF12">
    <property type="entry name" value="DNA MISMATCH REPAIR PROTEIN MLH1"/>
    <property type="match status" value="1"/>
</dbReference>
<dbReference type="Pfam" id="PF01119">
    <property type="entry name" value="DNA_mis_repair"/>
    <property type="match status" value="1"/>
</dbReference>
<dbReference type="Pfam" id="PF13589">
    <property type="entry name" value="HATPase_c_3"/>
    <property type="match status" value="1"/>
</dbReference>
<dbReference type="Pfam" id="PF08676">
    <property type="entry name" value="MutL_C"/>
    <property type="match status" value="1"/>
</dbReference>
<dbReference type="SMART" id="SM01340">
    <property type="entry name" value="DNA_mis_repair"/>
    <property type="match status" value="1"/>
</dbReference>
<dbReference type="SMART" id="SM00853">
    <property type="entry name" value="MutL_C"/>
    <property type="match status" value="1"/>
</dbReference>
<dbReference type="SUPFAM" id="SSF55874">
    <property type="entry name" value="ATPase domain of HSP90 chaperone/DNA topoisomerase II/histidine kinase"/>
    <property type="match status" value="1"/>
</dbReference>
<dbReference type="SUPFAM" id="SSF118116">
    <property type="entry name" value="DNA mismatch repair protein MutL"/>
    <property type="match status" value="1"/>
</dbReference>
<dbReference type="SUPFAM" id="SSF54211">
    <property type="entry name" value="Ribosomal protein S5 domain 2-like"/>
    <property type="match status" value="1"/>
</dbReference>
<dbReference type="PROSITE" id="PS00058">
    <property type="entry name" value="DNA_MISMATCH_REPAIR_1"/>
    <property type="match status" value="1"/>
</dbReference>
<sequence>MSEAPRIQLLSPRLANQIAAGEVVERPASVAKELLENSLDAGSRRIDVEVEQGGIKLLRVRDDGRGIPADDLPLALARHATSKIRELEDLERVMSLGFRGEALASISSVARLTMTSRTADAGEAWQVETEGRDMQPRVQPAAHPVGTSVEVRDLFFNTPARRKFLRAEKTEFDHLQEVIKRLALARFDVAFHLRHNGKTIFALHEARDELARARRVGAVCGQAFLEQALPIEVERNGLHLWGWVGLPTFSRSQPDLQYFYVNGRMVRDKLVAHAVRQAYRDVLYNGRHPTFVLFFEVDPAVVDVNVHPTKHEVRFRDSRMVHDFLYGTLHRALGEVRPDDQLAPPGATSLTEPRPTGAAAGEFGPQGEMRLAESVLESPAARVGWSGGSSASGGSSGYSAYTRPEAPPSLAEAGGAYKAYFAPLPAGEAPAALPESAQDIPPLGYALAQLKGIYILAENAHGLVLVDMHAAHERITYERLKVAMASEGLRGQPLLVPESIAVSEREADCAEEHSSWFQRLGFELQRLGPESLAIRQIPALLKQAEATQLVRDVIADLLEYGTSDRIQAHLNELLGTMACHGAVRANRRLTLPEMNALLRDMEITERSGQCNHGRPTWTQLGLDELDKLFLRGR</sequence>
<comment type="function">
    <text evidence="1">This protein is involved in the repair of mismatches in DNA. It is required for dam-dependent methyl-directed DNA mismatch repair. May act as a 'molecular matchmaker', a protein that promotes the formation of a stable complex between two or more DNA-binding proteins in an ATP-dependent manner without itself being part of a final effector complex.</text>
</comment>
<comment type="similarity">
    <text evidence="1">Belongs to the DNA mismatch repair MutL/HexB family.</text>
</comment>
<feature type="chain" id="PRO_0000177958" description="DNA mismatch repair protein MutL">
    <location>
        <begin position="1"/>
        <end position="633"/>
    </location>
</feature>
<feature type="region of interest" description="Disordered" evidence="2">
    <location>
        <begin position="337"/>
        <end position="364"/>
    </location>
</feature>
<feature type="region of interest" description="Disordered" evidence="2">
    <location>
        <begin position="383"/>
        <end position="405"/>
    </location>
</feature>
<feature type="compositionally biased region" description="Gly residues" evidence="2">
    <location>
        <begin position="385"/>
        <end position="396"/>
    </location>
</feature>
<evidence type="ECO:0000255" key="1">
    <source>
        <dbReference type="HAMAP-Rule" id="MF_00149"/>
    </source>
</evidence>
<evidence type="ECO:0000256" key="2">
    <source>
        <dbReference type="SAM" id="MobiDB-lite"/>
    </source>
</evidence>
<accession>Q9HUL8</accession>
<gene>
    <name evidence="1" type="primary">mutL</name>
    <name type="ordered locus">PA4946</name>
</gene>
<proteinExistence type="inferred from homology"/>